<gene>
    <name evidence="1" type="primary">gatB</name>
    <name type="ordered locus">Rru_A3175</name>
</gene>
<dbReference type="EC" id="6.3.5.-" evidence="1"/>
<dbReference type="EMBL" id="CP000230">
    <property type="protein sequence ID" value="ABC23970.1"/>
    <property type="molecule type" value="Genomic_DNA"/>
</dbReference>
<dbReference type="RefSeq" id="WP_011390923.1">
    <property type="nucleotide sequence ID" value="NC_007643.1"/>
</dbReference>
<dbReference type="RefSeq" id="YP_428257.1">
    <property type="nucleotide sequence ID" value="NC_007643.1"/>
</dbReference>
<dbReference type="SMR" id="Q2RPH5"/>
<dbReference type="STRING" id="269796.Rru_A3175"/>
<dbReference type="EnsemblBacteria" id="ABC23970">
    <property type="protein sequence ID" value="ABC23970"/>
    <property type="gene ID" value="Rru_A3175"/>
</dbReference>
<dbReference type="KEGG" id="rru:Rru_A3175"/>
<dbReference type="PATRIC" id="fig|269796.9.peg.3288"/>
<dbReference type="eggNOG" id="COG0064">
    <property type="taxonomic scope" value="Bacteria"/>
</dbReference>
<dbReference type="HOGENOM" id="CLU_019240_0_0_5"/>
<dbReference type="PhylomeDB" id="Q2RPH5"/>
<dbReference type="Proteomes" id="UP000001929">
    <property type="component" value="Chromosome"/>
</dbReference>
<dbReference type="GO" id="GO:0050566">
    <property type="term" value="F:asparaginyl-tRNA synthase (glutamine-hydrolyzing) activity"/>
    <property type="evidence" value="ECO:0007669"/>
    <property type="project" value="RHEA"/>
</dbReference>
<dbReference type="GO" id="GO:0005524">
    <property type="term" value="F:ATP binding"/>
    <property type="evidence" value="ECO:0007669"/>
    <property type="project" value="UniProtKB-KW"/>
</dbReference>
<dbReference type="GO" id="GO:0050567">
    <property type="term" value="F:glutaminyl-tRNA synthase (glutamine-hydrolyzing) activity"/>
    <property type="evidence" value="ECO:0007669"/>
    <property type="project" value="UniProtKB-UniRule"/>
</dbReference>
<dbReference type="GO" id="GO:0070681">
    <property type="term" value="P:glutaminyl-tRNAGln biosynthesis via transamidation"/>
    <property type="evidence" value="ECO:0007669"/>
    <property type="project" value="TreeGrafter"/>
</dbReference>
<dbReference type="GO" id="GO:0006412">
    <property type="term" value="P:translation"/>
    <property type="evidence" value="ECO:0007669"/>
    <property type="project" value="UniProtKB-UniRule"/>
</dbReference>
<dbReference type="FunFam" id="1.10.10.410:FF:000001">
    <property type="entry name" value="Aspartyl/glutamyl-tRNA(Asn/Gln) amidotransferase subunit B"/>
    <property type="match status" value="1"/>
</dbReference>
<dbReference type="FunFam" id="1.10.150.380:FF:000001">
    <property type="entry name" value="Aspartyl/glutamyl-tRNA(Asn/Gln) amidotransferase subunit B"/>
    <property type="match status" value="1"/>
</dbReference>
<dbReference type="Gene3D" id="1.10.10.410">
    <property type="match status" value="1"/>
</dbReference>
<dbReference type="Gene3D" id="1.10.150.380">
    <property type="entry name" value="GatB domain, N-terminal subdomain"/>
    <property type="match status" value="1"/>
</dbReference>
<dbReference type="HAMAP" id="MF_00121">
    <property type="entry name" value="GatB"/>
    <property type="match status" value="1"/>
</dbReference>
<dbReference type="InterPro" id="IPR017959">
    <property type="entry name" value="Asn/Gln-tRNA_amidoTrfase_suB/E"/>
</dbReference>
<dbReference type="InterPro" id="IPR006075">
    <property type="entry name" value="Asn/Gln-tRNA_Trfase_suB/E_cat"/>
</dbReference>
<dbReference type="InterPro" id="IPR018027">
    <property type="entry name" value="Asn/Gln_amidotransferase"/>
</dbReference>
<dbReference type="InterPro" id="IPR003789">
    <property type="entry name" value="Asn/Gln_tRNA_amidoTrase-B-like"/>
</dbReference>
<dbReference type="InterPro" id="IPR004413">
    <property type="entry name" value="GatB"/>
</dbReference>
<dbReference type="InterPro" id="IPR042114">
    <property type="entry name" value="GatB_C_1"/>
</dbReference>
<dbReference type="InterPro" id="IPR023168">
    <property type="entry name" value="GatB_Yqey_C_2"/>
</dbReference>
<dbReference type="InterPro" id="IPR017958">
    <property type="entry name" value="Gln-tRNA_amidoTrfase_suB_CS"/>
</dbReference>
<dbReference type="InterPro" id="IPR014746">
    <property type="entry name" value="Gln_synth/guanido_kin_cat_dom"/>
</dbReference>
<dbReference type="NCBIfam" id="TIGR00133">
    <property type="entry name" value="gatB"/>
    <property type="match status" value="1"/>
</dbReference>
<dbReference type="NCBIfam" id="NF004012">
    <property type="entry name" value="PRK05477.1-2"/>
    <property type="match status" value="1"/>
</dbReference>
<dbReference type="NCBIfam" id="NF004014">
    <property type="entry name" value="PRK05477.1-4"/>
    <property type="match status" value="1"/>
</dbReference>
<dbReference type="NCBIfam" id="NF004015">
    <property type="entry name" value="PRK05477.1-5"/>
    <property type="match status" value="1"/>
</dbReference>
<dbReference type="PANTHER" id="PTHR11659">
    <property type="entry name" value="GLUTAMYL-TRNA GLN AMIDOTRANSFERASE SUBUNIT B MITOCHONDRIAL AND PROKARYOTIC PET112-RELATED"/>
    <property type="match status" value="1"/>
</dbReference>
<dbReference type="PANTHER" id="PTHR11659:SF0">
    <property type="entry name" value="GLUTAMYL-TRNA(GLN) AMIDOTRANSFERASE SUBUNIT B, MITOCHONDRIAL"/>
    <property type="match status" value="1"/>
</dbReference>
<dbReference type="Pfam" id="PF02934">
    <property type="entry name" value="GatB_N"/>
    <property type="match status" value="1"/>
</dbReference>
<dbReference type="Pfam" id="PF02637">
    <property type="entry name" value="GatB_Yqey"/>
    <property type="match status" value="1"/>
</dbReference>
<dbReference type="SMART" id="SM00845">
    <property type="entry name" value="GatB_Yqey"/>
    <property type="match status" value="1"/>
</dbReference>
<dbReference type="SUPFAM" id="SSF89095">
    <property type="entry name" value="GatB/YqeY motif"/>
    <property type="match status" value="1"/>
</dbReference>
<dbReference type="SUPFAM" id="SSF55931">
    <property type="entry name" value="Glutamine synthetase/guanido kinase"/>
    <property type="match status" value="1"/>
</dbReference>
<dbReference type="PROSITE" id="PS01234">
    <property type="entry name" value="GATB"/>
    <property type="match status" value="1"/>
</dbReference>
<proteinExistence type="inferred from homology"/>
<sequence>MTYLIKGETATWEVVVGLEVHAQVVSQSKLFSGSSTRFGAPANSQVSLVDAAMPGMLPVINGLCVEQAVRTGLGLRAKINKRSIFARKNYFYADLPQGYQISQYEQPIVGEGKVVLDMPDGSSREVGIERLHLEQDAGKSMHDQHPTKSLIDLNRSGVALMEIVSKPDMREPEEAGAYLRKLRSIMRYLGTCDGNMEEGSMRADVNVSVRPIGTTDLRTRCEIKNVNSVRFVMQAIEAEAHRQVEVWESGGEVRQETRLFDPAKGETRSMRSKEHAHDYRYFPDPDLLPLEFDDAFVEKVRRSLPELPDDKKNRFIADFGLTPYDASVLVVDRENAAFFEKVAEGRDGKTAANWVINNLFGALAKAGKGVADSPVSAENLGKLLDLLKDEVINGRIAKDVFEIMMETGEDPDAIVEDKGLRQVTDTSAIEAAVDAVIAANPEKADDVRGGKEKLLGWFVGQVMKATQGKANPAMLNDILRAKLLG</sequence>
<protein>
    <recommendedName>
        <fullName evidence="1">Aspartyl/glutamyl-tRNA(Asn/Gln) amidotransferase subunit B</fullName>
        <shortName evidence="1">Asp/Glu-ADT subunit B</shortName>
        <ecNumber evidence="1">6.3.5.-</ecNumber>
    </recommendedName>
</protein>
<name>GATB_RHORT</name>
<comment type="function">
    <text evidence="1">Allows the formation of correctly charged Asn-tRNA(Asn) or Gln-tRNA(Gln) through the transamidation of misacylated Asp-tRNA(Asn) or Glu-tRNA(Gln) in organisms which lack either or both of asparaginyl-tRNA or glutaminyl-tRNA synthetases. The reaction takes place in the presence of glutamine and ATP through an activated phospho-Asp-tRNA(Asn) or phospho-Glu-tRNA(Gln).</text>
</comment>
<comment type="catalytic activity">
    <reaction evidence="1">
        <text>L-glutamyl-tRNA(Gln) + L-glutamine + ATP + H2O = L-glutaminyl-tRNA(Gln) + L-glutamate + ADP + phosphate + H(+)</text>
        <dbReference type="Rhea" id="RHEA:17521"/>
        <dbReference type="Rhea" id="RHEA-COMP:9681"/>
        <dbReference type="Rhea" id="RHEA-COMP:9684"/>
        <dbReference type="ChEBI" id="CHEBI:15377"/>
        <dbReference type="ChEBI" id="CHEBI:15378"/>
        <dbReference type="ChEBI" id="CHEBI:29985"/>
        <dbReference type="ChEBI" id="CHEBI:30616"/>
        <dbReference type="ChEBI" id="CHEBI:43474"/>
        <dbReference type="ChEBI" id="CHEBI:58359"/>
        <dbReference type="ChEBI" id="CHEBI:78520"/>
        <dbReference type="ChEBI" id="CHEBI:78521"/>
        <dbReference type="ChEBI" id="CHEBI:456216"/>
    </reaction>
</comment>
<comment type="catalytic activity">
    <reaction evidence="1">
        <text>L-aspartyl-tRNA(Asn) + L-glutamine + ATP + H2O = L-asparaginyl-tRNA(Asn) + L-glutamate + ADP + phosphate + 2 H(+)</text>
        <dbReference type="Rhea" id="RHEA:14513"/>
        <dbReference type="Rhea" id="RHEA-COMP:9674"/>
        <dbReference type="Rhea" id="RHEA-COMP:9677"/>
        <dbReference type="ChEBI" id="CHEBI:15377"/>
        <dbReference type="ChEBI" id="CHEBI:15378"/>
        <dbReference type="ChEBI" id="CHEBI:29985"/>
        <dbReference type="ChEBI" id="CHEBI:30616"/>
        <dbReference type="ChEBI" id="CHEBI:43474"/>
        <dbReference type="ChEBI" id="CHEBI:58359"/>
        <dbReference type="ChEBI" id="CHEBI:78515"/>
        <dbReference type="ChEBI" id="CHEBI:78516"/>
        <dbReference type="ChEBI" id="CHEBI:456216"/>
    </reaction>
</comment>
<comment type="subunit">
    <text evidence="1">Heterotrimer of A, B and C subunits.</text>
</comment>
<comment type="similarity">
    <text evidence="1">Belongs to the GatB/GatE family. GatB subfamily.</text>
</comment>
<feature type="chain" id="PRO_0000241269" description="Aspartyl/glutamyl-tRNA(Asn/Gln) amidotransferase subunit B">
    <location>
        <begin position="1"/>
        <end position="485"/>
    </location>
</feature>
<keyword id="KW-0067">ATP-binding</keyword>
<keyword id="KW-0436">Ligase</keyword>
<keyword id="KW-0547">Nucleotide-binding</keyword>
<keyword id="KW-0648">Protein biosynthesis</keyword>
<keyword id="KW-1185">Reference proteome</keyword>
<accession>Q2RPH5</accession>
<evidence type="ECO:0000255" key="1">
    <source>
        <dbReference type="HAMAP-Rule" id="MF_00121"/>
    </source>
</evidence>
<organism>
    <name type="scientific">Rhodospirillum rubrum (strain ATCC 11170 / ATH 1.1.1 / DSM 467 / LMG 4362 / NCIMB 8255 / S1)</name>
    <dbReference type="NCBI Taxonomy" id="269796"/>
    <lineage>
        <taxon>Bacteria</taxon>
        <taxon>Pseudomonadati</taxon>
        <taxon>Pseudomonadota</taxon>
        <taxon>Alphaproteobacteria</taxon>
        <taxon>Rhodospirillales</taxon>
        <taxon>Rhodospirillaceae</taxon>
        <taxon>Rhodospirillum</taxon>
    </lineage>
</organism>
<reference key="1">
    <citation type="journal article" date="2011" name="Stand. Genomic Sci.">
        <title>Complete genome sequence of Rhodospirillum rubrum type strain (S1).</title>
        <authorList>
            <person name="Munk A.C."/>
            <person name="Copeland A."/>
            <person name="Lucas S."/>
            <person name="Lapidus A."/>
            <person name="Del Rio T.G."/>
            <person name="Barry K."/>
            <person name="Detter J.C."/>
            <person name="Hammon N."/>
            <person name="Israni S."/>
            <person name="Pitluck S."/>
            <person name="Brettin T."/>
            <person name="Bruce D."/>
            <person name="Han C."/>
            <person name="Tapia R."/>
            <person name="Gilna P."/>
            <person name="Schmutz J."/>
            <person name="Larimer F."/>
            <person name="Land M."/>
            <person name="Kyrpides N.C."/>
            <person name="Mavromatis K."/>
            <person name="Richardson P."/>
            <person name="Rohde M."/>
            <person name="Goeker M."/>
            <person name="Klenk H.P."/>
            <person name="Zhang Y."/>
            <person name="Roberts G.P."/>
            <person name="Reslewic S."/>
            <person name="Schwartz D.C."/>
        </authorList>
    </citation>
    <scope>NUCLEOTIDE SEQUENCE [LARGE SCALE GENOMIC DNA]</scope>
    <source>
        <strain>ATCC 11170 / ATH 1.1.1 / DSM 467 / LMG 4362 / NCIMB 8255 / S1</strain>
    </source>
</reference>